<dbReference type="EMBL" id="CP000422">
    <property type="protein sequence ID" value="ABJ67905.1"/>
    <property type="molecule type" value="Genomic_DNA"/>
</dbReference>
<dbReference type="RefSeq" id="WP_002833574.1">
    <property type="nucleotide sequence ID" value="NC_008525.1"/>
</dbReference>
<dbReference type="SMR" id="Q03FW7"/>
<dbReference type="STRING" id="278197.PEPE_0845"/>
<dbReference type="GeneID" id="33062454"/>
<dbReference type="KEGG" id="ppe:PEPE_0845"/>
<dbReference type="eggNOG" id="COG2739">
    <property type="taxonomic scope" value="Bacteria"/>
</dbReference>
<dbReference type="HOGENOM" id="CLU_129218_1_0_9"/>
<dbReference type="OrthoDB" id="6392at2"/>
<dbReference type="Proteomes" id="UP000000773">
    <property type="component" value="Chromosome"/>
</dbReference>
<dbReference type="Gene3D" id="1.10.10.10">
    <property type="entry name" value="Winged helix-like DNA-binding domain superfamily/Winged helix DNA-binding domain"/>
    <property type="match status" value="1"/>
</dbReference>
<dbReference type="HAMAP" id="MF_00245">
    <property type="entry name" value="UPF0122"/>
    <property type="match status" value="1"/>
</dbReference>
<dbReference type="InterPro" id="IPR013324">
    <property type="entry name" value="RNA_pol_sigma_r3/r4-like"/>
</dbReference>
<dbReference type="InterPro" id="IPR007394">
    <property type="entry name" value="UPF0122"/>
</dbReference>
<dbReference type="InterPro" id="IPR054831">
    <property type="entry name" value="UPF0122_fam_protein"/>
</dbReference>
<dbReference type="InterPro" id="IPR036388">
    <property type="entry name" value="WH-like_DNA-bd_sf"/>
</dbReference>
<dbReference type="NCBIfam" id="NF001068">
    <property type="entry name" value="PRK00118.1-4"/>
    <property type="match status" value="1"/>
</dbReference>
<dbReference type="NCBIfam" id="NF001070">
    <property type="entry name" value="PRK00118.1-6"/>
    <property type="match status" value="1"/>
</dbReference>
<dbReference type="NCBIfam" id="NF045758">
    <property type="entry name" value="YlxM"/>
    <property type="match status" value="1"/>
</dbReference>
<dbReference type="PANTHER" id="PTHR40083">
    <property type="entry name" value="UPF0122 PROTEIN CBO2450/CLC_2298"/>
    <property type="match status" value="1"/>
</dbReference>
<dbReference type="PANTHER" id="PTHR40083:SF1">
    <property type="entry name" value="UPF0122 PROTEIN YLXM"/>
    <property type="match status" value="1"/>
</dbReference>
<dbReference type="Pfam" id="PF04297">
    <property type="entry name" value="UPF0122"/>
    <property type="match status" value="1"/>
</dbReference>
<dbReference type="SUPFAM" id="SSF88659">
    <property type="entry name" value="Sigma3 and sigma4 domains of RNA polymerase sigma factors"/>
    <property type="match status" value="1"/>
</dbReference>
<sequence>MEIEKNNRINSLLEFYEQLLTPKQKEYITLYYADDYSLGEISEEFQVSRQAVYDNIKRTVNILEKYEQQLHLLSNFEVRNAKFDQIRAYINQKYPEDTELKHFLDDLEKSEEE</sequence>
<feature type="chain" id="PRO_1000012536" description="UPF0122 protein PEPE_0845">
    <location>
        <begin position="1"/>
        <end position="113"/>
    </location>
</feature>
<evidence type="ECO:0000255" key="1">
    <source>
        <dbReference type="HAMAP-Rule" id="MF_00245"/>
    </source>
</evidence>
<reference key="1">
    <citation type="journal article" date="2006" name="Proc. Natl. Acad. Sci. U.S.A.">
        <title>Comparative genomics of the lactic acid bacteria.</title>
        <authorList>
            <person name="Makarova K.S."/>
            <person name="Slesarev A."/>
            <person name="Wolf Y.I."/>
            <person name="Sorokin A."/>
            <person name="Mirkin B."/>
            <person name="Koonin E.V."/>
            <person name="Pavlov A."/>
            <person name="Pavlova N."/>
            <person name="Karamychev V."/>
            <person name="Polouchine N."/>
            <person name="Shakhova V."/>
            <person name="Grigoriev I."/>
            <person name="Lou Y."/>
            <person name="Rohksar D."/>
            <person name="Lucas S."/>
            <person name="Huang K."/>
            <person name="Goodstein D.M."/>
            <person name="Hawkins T."/>
            <person name="Plengvidhya V."/>
            <person name="Welker D."/>
            <person name="Hughes J."/>
            <person name="Goh Y."/>
            <person name="Benson A."/>
            <person name="Baldwin K."/>
            <person name="Lee J.-H."/>
            <person name="Diaz-Muniz I."/>
            <person name="Dosti B."/>
            <person name="Smeianov V."/>
            <person name="Wechter W."/>
            <person name="Barabote R."/>
            <person name="Lorca G."/>
            <person name="Altermann E."/>
            <person name="Barrangou R."/>
            <person name="Ganesan B."/>
            <person name="Xie Y."/>
            <person name="Rawsthorne H."/>
            <person name="Tamir D."/>
            <person name="Parker C."/>
            <person name="Breidt F."/>
            <person name="Broadbent J.R."/>
            <person name="Hutkins R."/>
            <person name="O'Sullivan D."/>
            <person name="Steele J."/>
            <person name="Unlu G."/>
            <person name="Saier M.H. Jr."/>
            <person name="Klaenhammer T."/>
            <person name="Richardson P."/>
            <person name="Kozyavkin S."/>
            <person name="Weimer B.C."/>
            <person name="Mills D.A."/>
        </authorList>
    </citation>
    <scope>NUCLEOTIDE SEQUENCE [LARGE SCALE GENOMIC DNA]</scope>
    <source>
        <strain>ATCC 25745 / CCUG 21536 / LMG 10740 / 183-1w</strain>
    </source>
</reference>
<proteinExistence type="inferred from homology"/>
<comment type="function">
    <text evidence="1">Might take part in the signal recognition particle (SRP) pathway. This is inferred from the conservation of its genetic proximity to ftsY/ffh. May be a regulatory protein.</text>
</comment>
<comment type="similarity">
    <text evidence="1">Belongs to the UPF0122 family.</text>
</comment>
<gene>
    <name type="ordered locus">PEPE_0845</name>
</gene>
<name>Y845_PEDPA</name>
<organism>
    <name type="scientific">Pediococcus pentosaceus (strain ATCC 25745 / CCUG 21536 / LMG 10740 / 183-1w)</name>
    <dbReference type="NCBI Taxonomy" id="278197"/>
    <lineage>
        <taxon>Bacteria</taxon>
        <taxon>Bacillati</taxon>
        <taxon>Bacillota</taxon>
        <taxon>Bacilli</taxon>
        <taxon>Lactobacillales</taxon>
        <taxon>Lactobacillaceae</taxon>
        <taxon>Pediococcus</taxon>
    </lineage>
</organism>
<accession>Q03FW7</accession>
<protein>
    <recommendedName>
        <fullName evidence="1">UPF0122 protein PEPE_0845</fullName>
    </recommendedName>
</protein>